<evidence type="ECO:0000250" key="1">
    <source>
        <dbReference type="UniProtKB" id="P04424"/>
    </source>
</evidence>
<evidence type="ECO:0000250" key="2">
    <source>
        <dbReference type="UniProtKB" id="P24058"/>
    </source>
</evidence>
<evidence type="ECO:0000250" key="3">
    <source>
        <dbReference type="UniProtKB" id="Q91YI0"/>
    </source>
</evidence>
<evidence type="ECO:0000305" key="4"/>
<accession>Q3SZJ0</accession>
<proteinExistence type="evidence at transcript level"/>
<dbReference type="EC" id="4.3.2.1" evidence="1"/>
<dbReference type="EMBL" id="BC102831">
    <property type="protein sequence ID" value="AAI02832.1"/>
    <property type="molecule type" value="mRNA"/>
</dbReference>
<dbReference type="RefSeq" id="NP_001029600.1">
    <property type="nucleotide sequence ID" value="NM_001034428.1"/>
</dbReference>
<dbReference type="SMR" id="Q3SZJ0"/>
<dbReference type="FunCoup" id="Q3SZJ0">
    <property type="interactions" value="1430"/>
</dbReference>
<dbReference type="STRING" id="9913.ENSBTAP00000074023"/>
<dbReference type="iPTMnet" id="Q3SZJ0"/>
<dbReference type="PaxDb" id="9913-ENSBTAP00000020365"/>
<dbReference type="PeptideAtlas" id="Q3SZJ0"/>
<dbReference type="GeneID" id="512771"/>
<dbReference type="KEGG" id="bta:512771"/>
<dbReference type="CTD" id="435"/>
<dbReference type="VEuPathDB" id="HostDB:ENSBTAG00000015314"/>
<dbReference type="eggNOG" id="KOG1316">
    <property type="taxonomic scope" value="Eukaryota"/>
</dbReference>
<dbReference type="InParanoid" id="Q3SZJ0"/>
<dbReference type="OrthoDB" id="2561043at2759"/>
<dbReference type="Reactome" id="R-BTA-70635">
    <property type="pathway name" value="Urea cycle"/>
</dbReference>
<dbReference type="SABIO-RK" id="Q3SZJ0"/>
<dbReference type="UniPathway" id="UPA00068">
    <property type="reaction ID" value="UER00114"/>
</dbReference>
<dbReference type="UniPathway" id="UPA00158">
    <property type="reaction ID" value="UER00273"/>
</dbReference>
<dbReference type="Proteomes" id="UP000009136">
    <property type="component" value="Chromosome 25"/>
</dbReference>
<dbReference type="Bgee" id="ENSBTAG00000015314">
    <property type="expression patterns" value="Expressed in liver and 104 other cell types or tissues"/>
</dbReference>
<dbReference type="GO" id="GO:0005829">
    <property type="term" value="C:cytosol"/>
    <property type="evidence" value="ECO:0000318"/>
    <property type="project" value="GO_Central"/>
</dbReference>
<dbReference type="GO" id="GO:0004056">
    <property type="term" value="F:argininosuccinate lyase activity"/>
    <property type="evidence" value="ECO:0000250"/>
    <property type="project" value="UniProtKB"/>
</dbReference>
<dbReference type="GO" id="GO:0042450">
    <property type="term" value="P:arginine biosynthetic process via ornithine"/>
    <property type="evidence" value="ECO:0000318"/>
    <property type="project" value="GO_Central"/>
</dbReference>
<dbReference type="GO" id="GO:0006526">
    <property type="term" value="P:L-arginine biosynthetic process"/>
    <property type="evidence" value="ECO:0000250"/>
    <property type="project" value="UniProtKB"/>
</dbReference>
<dbReference type="GO" id="GO:0045429">
    <property type="term" value="P:positive regulation of nitric oxide biosynthetic process"/>
    <property type="evidence" value="ECO:0000250"/>
    <property type="project" value="UniProtKB"/>
</dbReference>
<dbReference type="GO" id="GO:0000050">
    <property type="term" value="P:urea cycle"/>
    <property type="evidence" value="ECO:0007669"/>
    <property type="project" value="UniProtKB-UniPathway"/>
</dbReference>
<dbReference type="CDD" id="cd01359">
    <property type="entry name" value="Argininosuccinate_lyase"/>
    <property type="match status" value="1"/>
</dbReference>
<dbReference type="FunFam" id="1.10.40.30:FF:000001">
    <property type="entry name" value="Argininosuccinate lyase"/>
    <property type="match status" value="1"/>
</dbReference>
<dbReference type="FunFam" id="1.20.200.10:FF:000015">
    <property type="entry name" value="argininosuccinate lyase isoform X2"/>
    <property type="match status" value="2"/>
</dbReference>
<dbReference type="FunFam" id="1.10.275.10:FF:000014">
    <property type="entry name" value="Os03g0824900 protein"/>
    <property type="match status" value="1"/>
</dbReference>
<dbReference type="Gene3D" id="1.10.40.30">
    <property type="entry name" value="Fumarase/aspartase (C-terminal domain)"/>
    <property type="match status" value="1"/>
</dbReference>
<dbReference type="Gene3D" id="1.20.200.10">
    <property type="entry name" value="Fumarase/aspartase (Central domain)"/>
    <property type="match status" value="1"/>
</dbReference>
<dbReference type="Gene3D" id="1.10.275.10">
    <property type="entry name" value="Fumarase/aspartase (N-terminal domain)"/>
    <property type="match status" value="1"/>
</dbReference>
<dbReference type="HAMAP" id="MF_00006">
    <property type="entry name" value="Arg_succ_lyase"/>
    <property type="match status" value="1"/>
</dbReference>
<dbReference type="InterPro" id="IPR029419">
    <property type="entry name" value="Arg_succ_lyase_C"/>
</dbReference>
<dbReference type="InterPro" id="IPR009049">
    <property type="entry name" value="Argininosuccinate_lyase"/>
</dbReference>
<dbReference type="InterPro" id="IPR024083">
    <property type="entry name" value="Fumarase/histidase_N"/>
</dbReference>
<dbReference type="InterPro" id="IPR020557">
    <property type="entry name" value="Fumarate_lyase_CS"/>
</dbReference>
<dbReference type="InterPro" id="IPR000362">
    <property type="entry name" value="Fumarate_lyase_fam"/>
</dbReference>
<dbReference type="InterPro" id="IPR022761">
    <property type="entry name" value="Fumarate_lyase_N"/>
</dbReference>
<dbReference type="InterPro" id="IPR008948">
    <property type="entry name" value="L-Aspartase-like"/>
</dbReference>
<dbReference type="NCBIfam" id="TIGR00838">
    <property type="entry name" value="argH"/>
    <property type="match status" value="1"/>
</dbReference>
<dbReference type="PANTHER" id="PTHR43814">
    <property type="entry name" value="ARGININOSUCCINATE LYASE"/>
    <property type="match status" value="1"/>
</dbReference>
<dbReference type="PANTHER" id="PTHR43814:SF1">
    <property type="entry name" value="ARGININOSUCCINATE LYASE"/>
    <property type="match status" value="1"/>
</dbReference>
<dbReference type="Pfam" id="PF14698">
    <property type="entry name" value="ASL_C2"/>
    <property type="match status" value="1"/>
</dbReference>
<dbReference type="Pfam" id="PF00206">
    <property type="entry name" value="Lyase_1"/>
    <property type="match status" value="1"/>
</dbReference>
<dbReference type="PRINTS" id="PR00145">
    <property type="entry name" value="ARGSUCLYASE"/>
</dbReference>
<dbReference type="PRINTS" id="PR00149">
    <property type="entry name" value="FUMRATELYASE"/>
</dbReference>
<dbReference type="SUPFAM" id="SSF48557">
    <property type="entry name" value="L-aspartase-like"/>
    <property type="match status" value="1"/>
</dbReference>
<dbReference type="PROSITE" id="PS00163">
    <property type="entry name" value="FUMARATE_LYASES"/>
    <property type="match status" value="1"/>
</dbReference>
<comment type="function">
    <text evidence="1">Catalyzes the reversible cleavage of L-argininosuccinate to fumarate and L-arginine, an intermediate step reaction in the urea cycle mostly providing for hepatic nitrogen detoxification into excretable urea as well as de novo L-arginine synthesis in nonhepatic tissues (By similarity). Essential regulator of intracellular and extracellular L-arginine pools. As part of citrulline-nitric oxide cycle, forms tissue-specific multiprotein complexes with argininosuccinate synthase ASS1, transport protein SLC7A1 and nitric oxide synthase NOS1, NOS2 or NOS3, allowing for cell-autonomous L-arginine synthesis while channeling extracellular L-arginine to nitric oxide synthesis pathway (By similarity).</text>
</comment>
<comment type="catalytic activity">
    <reaction evidence="1">
        <text>2-(N(omega)-L-arginino)succinate = fumarate + L-arginine</text>
        <dbReference type="Rhea" id="RHEA:24020"/>
        <dbReference type="ChEBI" id="CHEBI:29806"/>
        <dbReference type="ChEBI" id="CHEBI:32682"/>
        <dbReference type="ChEBI" id="CHEBI:57472"/>
        <dbReference type="EC" id="4.3.2.1"/>
    </reaction>
    <physiologicalReaction direction="left-to-right" evidence="1">
        <dbReference type="Rhea" id="RHEA:24021"/>
    </physiologicalReaction>
    <physiologicalReaction direction="right-to-left" evidence="1">
        <dbReference type="Rhea" id="RHEA:24022"/>
    </physiologicalReaction>
</comment>
<comment type="activity regulation">
    <text evidence="1">Enzyme activity is regulated by acetylation.</text>
</comment>
<comment type="pathway">
    <text evidence="1">Amino-acid biosynthesis; L-arginine biosynthesis; L-arginine from L-ornithine and carbamoyl phosphate: step 3/3.</text>
</comment>
<comment type="pathway">
    <text evidence="1">Nitrogen metabolism; urea cycle; L-arginine and fumarate from (N(omega)-L-arginino)succinate: step 1/1.</text>
</comment>
<comment type="subunit">
    <text evidence="1 3">Homotetramer (By similarity). Forms tissue-specific complexes with ASS1, SLC7A1, HSP90AA1 and nitric oxide synthase NOS1, NOS2 or NOS3; the complex maintenance is independent of ASL catalytic function (By similarity).</text>
</comment>
<comment type="PTM">
    <text evidence="1">Acetylation modifies enzyme activity in response to alterations of extracellular nutrient availability. Acetylation increased with trichostin A (TSA) or with nicotinamide (NAM). Glucose increases acetylation by about a factor of 3 with decreasing enzyme activity. Acetylation on Lys-288 is decreased on the addition of extra amino acids resulting in activation of enzyme activity.</text>
</comment>
<comment type="similarity">
    <text evidence="4">Belongs to the lyase 1 family. Argininosuccinate lyase subfamily.</text>
</comment>
<feature type="initiator methionine" description="Removed" evidence="3">
    <location>
        <position position="1"/>
    </location>
</feature>
<feature type="chain" id="PRO_0000273253" description="Argininosuccinate lyase">
    <location>
        <begin position="2"/>
        <end position="473"/>
    </location>
</feature>
<feature type="active site" description="Proton acceptor" evidence="2">
    <location>
        <position position="160"/>
    </location>
</feature>
<feature type="active site" description="Proton donor" evidence="2">
    <location>
        <position position="281"/>
    </location>
</feature>
<feature type="binding site" description="in chain A" evidence="2">
    <location>
        <position position="27"/>
    </location>
    <ligand>
        <name>2-(N(omega)-L-arginino)succinate</name>
        <dbReference type="ChEBI" id="CHEBI:57472"/>
        <note>ligand shared between tetrameric partners</note>
    </ligand>
</feature>
<feature type="binding site" description="in chain A" evidence="2">
    <location>
        <position position="114"/>
    </location>
    <ligand>
        <name>2-(N(omega)-L-arginino)succinate</name>
        <dbReference type="ChEBI" id="CHEBI:57472"/>
        <note>ligand shared between tetrameric partners</note>
    </ligand>
</feature>
<feature type="binding site" description="in chain C" evidence="2">
    <location>
        <position position="159"/>
    </location>
    <ligand>
        <name>2-(N(omega)-L-arginino)succinate</name>
        <dbReference type="ChEBI" id="CHEBI:57472"/>
        <note>ligand shared between tetrameric partners</note>
    </ligand>
</feature>
<feature type="binding site" description="in chain B" evidence="2">
    <location>
        <position position="289"/>
    </location>
    <ligand>
        <name>2-(N(omega)-L-arginino)succinate</name>
        <dbReference type="ChEBI" id="CHEBI:57472"/>
        <note>ligand shared between tetrameric partners</note>
    </ligand>
</feature>
<feature type="binding site" description="in chain A" evidence="2">
    <location>
        <position position="321"/>
    </location>
    <ligand>
        <name>2-(N(omega)-L-arginino)succinate</name>
        <dbReference type="ChEBI" id="CHEBI:57472"/>
        <note>ligand shared between tetrameric partners</note>
    </ligand>
</feature>
<feature type="binding site" description="in chain A" evidence="2">
    <location>
        <position position="326"/>
    </location>
    <ligand>
        <name>2-(N(omega)-L-arginino)succinate</name>
        <dbReference type="ChEBI" id="CHEBI:57472"/>
        <note>ligand shared between tetrameric partners</note>
    </ligand>
</feature>
<feature type="binding site" description="in chain A" evidence="2">
    <location>
        <position position="329"/>
    </location>
    <ligand>
        <name>2-(N(omega)-L-arginino)succinate</name>
        <dbReference type="ChEBI" id="CHEBI:57472"/>
        <note>ligand shared between tetrameric partners</note>
    </ligand>
</feature>
<feature type="site" description="Increases basicity of active site His" evidence="2">
    <location>
        <position position="294"/>
    </location>
</feature>
<feature type="modified residue" description="N-acetylalanine" evidence="3">
    <location>
        <position position="2"/>
    </location>
</feature>
<feature type="modified residue" description="N6-acetyllysine" evidence="3">
    <location>
        <position position="7"/>
    </location>
</feature>
<feature type="modified residue" description="N6-acetyllysine" evidence="1">
    <location>
        <position position="69"/>
    </location>
</feature>
<feature type="modified residue" description="N6-acetyllysine" evidence="1">
    <location>
        <position position="288"/>
    </location>
</feature>
<protein>
    <recommendedName>
        <fullName>Argininosuccinate lyase</fullName>
        <shortName>ASAL</shortName>
        <ecNumber evidence="1">4.3.2.1</ecNumber>
    </recommendedName>
    <alternativeName>
        <fullName>Arginosuccinase</fullName>
    </alternativeName>
</protein>
<organism>
    <name type="scientific">Bos taurus</name>
    <name type="common">Bovine</name>
    <dbReference type="NCBI Taxonomy" id="9913"/>
    <lineage>
        <taxon>Eukaryota</taxon>
        <taxon>Metazoa</taxon>
        <taxon>Chordata</taxon>
        <taxon>Craniata</taxon>
        <taxon>Vertebrata</taxon>
        <taxon>Euteleostomi</taxon>
        <taxon>Mammalia</taxon>
        <taxon>Eutheria</taxon>
        <taxon>Laurasiatheria</taxon>
        <taxon>Artiodactyla</taxon>
        <taxon>Ruminantia</taxon>
        <taxon>Pecora</taxon>
        <taxon>Bovidae</taxon>
        <taxon>Bovinae</taxon>
        <taxon>Bos</taxon>
    </lineage>
</organism>
<name>ARLY_BOVIN</name>
<gene>
    <name type="primary">ASL</name>
</gene>
<reference key="1">
    <citation type="submission" date="2005-08" db="EMBL/GenBank/DDBJ databases">
        <authorList>
            <consortium name="NIH - Mammalian Gene Collection (MGC) project"/>
        </authorList>
    </citation>
    <scope>NUCLEOTIDE SEQUENCE [LARGE SCALE MRNA]</scope>
    <source>
        <strain>Crossbred X Angus</strain>
        <tissue>Ileum</tissue>
    </source>
</reference>
<sequence length="473" mass="52743">MASESGKLWGGRFVGTVDPIMEKFNSSITYDRHLWEADVQGSKAYSRGLEKAGLLTKAEMDQILHGLDKVAEEWAQGTFKLNPNDEDIHTANERRLKELIGETAGKLHTGRSRNDQVVTDLRLWMRQNCSMLSALLCELIRTMVDRAEAERDVLFPGYTHLQRAQPIRWSHWILSHAVALTRDSERLLEVRKRINVLPLGSGAIAGNPLGVDRELLRAELDFGAITLNSMDATSERDFVAEFLFWASLCMTHLSRMAEDLILYGTKEFSFVQLSDAYSTGSSLMPQKKNPDSLELIRSKAGRVFGRCAGLLMTLKGLPSTYNKDLQEDKEAVFEVSDTMSAVLQVATGVISTLQIHRENMGRALSPDMLATDLAYYLVRKGMPFRQAHEASGKAVFMAETKGVALNQLSLQELQTISPLFSGDVSHVWDYGHSVEQYEALGGTARSSVDWQIGQLRALLRAQQTESPPHASPK</sequence>
<keyword id="KW-0007">Acetylation</keyword>
<keyword id="KW-0028">Amino-acid biosynthesis</keyword>
<keyword id="KW-0055">Arginine biosynthesis</keyword>
<keyword id="KW-0456">Lyase</keyword>
<keyword id="KW-1185">Reference proteome</keyword>
<keyword id="KW-0835">Urea cycle</keyword>